<feature type="initiator methionine" description="Removed" evidence="1">
    <location>
        <position position="1"/>
    </location>
</feature>
<feature type="chain" id="PRO_0000340040" description="Photosystem II protein D1" evidence="2">
    <location>
        <begin position="2"/>
        <end position="344"/>
    </location>
</feature>
<feature type="propeptide" id="PRO_0000340041" evidence="2">
    <location>
        <begin position="345"/>
        <end position="353"/>
    </location>
</feature>
<feature type="transmembrane region" description="Helical" evidence="2">
    <location>
        <begin position="29"/>
        <end position="46"/>
    </location>
</feature>
<feature type="transmembrane region" description="Helical" evidence="2">
    <location>
        <begin position="118"/>
        <end position="133"/>
    </location>
</feature>
<feature type="transmembrane region" description="Helical" evidence="2">
    <location>
        <begin position="142"/>
        <end position="156"/>
    </location>
</feature>
<feature type="transmembrane region" description="Helical" evidence="2">
    <location>
        <begin position="197"/>
        <end position="218"/>
    </location>
</feature>
<feature type="transmembrane region" description="Helical" evidence="2">
    <location>
        <begin position="274"/>
        <end position="288"/>
    </location>
</feature>
<feature type="binding site" description="axial binding residue" evidence="2">
    <location>
        <position position="118"/>
    </location>
    <ligand>
        <name>chlorophyll a</name>
        <dbReference type="ChEBI" id="CHEBI:58416"/>
        <label>ChlzD1</label>
    </ligand>
    <ligandPart>
        <name>Mg</name>
        <dbReference type="ChEBI" id="CHEBI:25107"/>
    </ligandPart>
</feature>
<feature type="binding site" evidence="2">
    <location>
        <position position="126"/>
    </location>
    <ligand>
        <name>pheophytin a</name>
        <dbReference type="ChEBI" id="CHEBI:136840"/>
        <label>D1</label>
    </ligand>
</feature>
<feature type="binding site" evidence="2">
    <location>
        <position position="170"/>
    </location>
    <ligand>
        <name>[CaMn4O5] cluster</name>
        <dbReference type="ChEBI" id="CHEBI:189552"/>
    </ligand>
</feature>
<feature type="binding site" evidence="2">
    <location>
        <position position="189"/>
    </location>
    <ligand>
        <name>[CaMn4O5] cluster</name>
        <dbReference type="ChEBI" id="CHEBI:189552"/>
    </ligand>
</feature>
<feature type="binding site" description="axial binding residue" evidence="2">
    <location>
        <position position="198"/>
    </location>
    <ligand>
        <name>chlorophyll a</name>
        <dbReference type="ChEBI" id="CHEBI:58416"/>
        <label>PD1</label>
    </ligand>
    <ligandPart>
        <name>Mg</name>
        <dbReference type="ChEBI" id="CHEBI:25107"/>
    </ligandPart>
</feature>
<feature type="binding site" evidence="2">
    <location>
        <position position="215"/>
    </location>
    <ligand>
        <name>a quinone</name>
        <dbReference type="ChEBI" id="CHEBI:132124"/>
        <label>B</label>
    </ligand>
</feature>
<feature type="binding site" evidence="2">
    <location>
        <position position="215"/>
    </location>
    <ligand>
        <name>Fe cation</name>
        <dbReference type="ChEBI" id="CHEBI:24875"/>
        <note>ligand shared with heterodimeric partner</note>
    </ligand>
</feature>
<feature type="binding site" evidence="2">
    <location>
        <begin position="264"/>
        <end position="265"/>
    </location>
    <ligand>
        <name>a quinone</name>
        <dbReference type="ChEBI" id="CHEBI:132124"/>
        <label>B</label>
    </ligand>
</feature>
<feature type="binding site" evidence="2">
    <location>
        <position position="272"/>
    </location>
    <ligand>
        <name>Fe cation</name>
        <dbReference type="ChEBI" id="CHEBI:24875"/>
        <note>ligand shared with heterodimeric partner</note>
    </ligand>
</feature>
<feature type="binding site" evidence="2">
    <location>
        <position position="332"/>
    </location>
    <ligand>
        <name>[CaMn4O5] cluster</name>
        <dbReference type="ChEBI" id="CHEBI:189552"/>
    </ligand>
</feature>
<feature type="binding site" evidence="2">
    <location>
        <position position="333"/>
    </location>
    <ligand>
        <name>[CaMn4O5] cluster</name>
        <dbReference type="ChEBI" id="CHEBI:189552"/>
    </ligand>
</feature>
<feature type="binding site" evidence="2">
    <location>
        <position position="342"/>
    </location>
    <ligand>
        <name>[CaMn4O5] cluster</name>
        <dbReference type="ChEBI" id="CHEBI:189552"/>
    </ligand>
</feature>
<feature type="binding site" evidence="2">
    <location>
        <position position="344"/>
    </location>
    <ligand>
        <name>[CaMn4O5] cluster</name>
        <dbReference type="ChEBI" id="CHEBI:189552"/>
    </ligand>
</feature>
<feature type="site" description="Tyrosine radical intermediate" evidence="2">
    <location>
        <position position="161"/>
    </location>
</feature>
<feature type="site" description="Stabilizes free radical intermediate" evidence="2">
    <location>
        <position position="190"/>
    </location>
</feature>
<feature type="site" description="Cleavage; by CTPA" evidence="2">
    <location>
        <begin position="344"/>
        <end position="345"/>
    </location>
</feature>
<feature type="modified residue" description="N-acetylthreonine" evidence="1 2">
    <location>
        <position position="2"/>
    </location>
</feature>
<feature type="modified residue" description="Phosphothreonine" evidence="1 2">
    <location>
        <position position="2"/>
    </location>
</feature>
<evidence type="ECO:0000250" key="1">
    <source>
        <dbReference type="UniProtKB" id="P83755"/>
    </source>
</evidence>
<evidence type="ECO:0000255" key="2">
    <source>
        <dbReference type="HAMAP-Rule" id="MF_01379"/>
    </source>
</evidence>
<accession>A4QJR4</accession>
<comment type="function">
    <text evidence="2">Photosystem II (PSII) is a light-driven water:plastoquinone oxidoreductase that uses light energy to abstract electrons from H(2)O, generating O(2) and a proton gradient subsequently used for ATP formation. It consists of a core antenna complex that captures photons, and an electron transfer chain that converts photonic excitation into a charge separation. The D1/D2 (PsbA/PsbD) reaction center heterodimer binds P680, the primary electron donor of PSII as well as several subsequent electron acceptors.</text>
</comment>
<comment type="catalytic activity">
    <reaction evidence="2">
        <text>2 a plastoquinone + 4 hnu + 2 H2O = 2 a plastoquinol + O2</text>
        <dbReference type="Rhea" id="RHEA:36359"/>
        <dbReference type="Rhea" id="RHEA-COMP:9561"/>
        <dbReference type="Rhea" id="RHEA-COMP:9562"/>
        <dbReference type="ChEBI" id="CHEBI:15377"/>
        <dbReference type="ChEBI" id="CHEBI:15379"/>
        <dbReference type="ChEBI" id="CHEBI:17757"/>
        <dbReference type="ChEBI" id="CHEBI:30212"/>
        <dbReference type="ChEBI" id="CHEBI:62192"/>
        <dbReference type="EC" id="1.10.3.9"/>
    </reaction>
</comment>
<comment type="cofactor">
    <text evidence="2">The D1/D2 heterodimer binds P680, chlorophylls that are the primary electron donor of PSII, and subsequent electron acceptors. It shares a non-heme iron and each subunit binds pheophytin, quinone, additional chlorophylls, carotenoids and lipids. D1 provides most of the ligands for the Mn4-Ca-O5 cluster of the oxygen-evolving complex (OEC). There is also a Cl(-1) ion associated with D1 and D2, which is required for oxygen evolution. The PSII complex binds additional chlorophylls, carotenoids and specific lipids.</text>
</comment>
<comment type="subunit">
    <text evidence="2">PSII is composed of 1 copy each of membrane proteins PsbA, PsbB, PsbC, PsbD, PsbE, PsbF, PsbH, PsbI, PsbJ, PsbK, PsbL, PsbM, PsbT, PsbX, PsbY, PsbZ, Psb30/Ycf12, at least 3 peripheral proteins of the oxygen-evolving complex and a large number of cofactors. It forms dimeric complexes.</text>
</comment>
<comment type="subcellular location">
    <subcellularLocation>
        <location evidence="2">Plastid</location>
        <location evidence="2">Chloroplast thylakoid membrane</location>
        <topology evidence="2">Multi-pass membrane protein</topology>
    </subcellularLocation>
</comment>
<comment type="PTM">
    <text evidence="2">Tyr-161 forms a radical intermediate that is referred to as redox-active TyrZ, YZ or Y-Z.</text>
</comment>
<comment type="PTM">
    <text evidence="2">C-terminally processed by CTPA; processing is essential to allow assembly of the oxygen-evolving complex and thus photosynthetic growth.</text>
</comment>
<comment type="miscellaneous">
    <text evidence="2">2 of the reaction center chlorophylls (ChlD1 and ChlD2) are entirely coordinated by water.</text>
</comment>
<comment type="miscellaneous">
    <text evidence="2">Herbicides such as atrazine, BNT, diuron or ioxynil bind in the Q(B) binding site and block subsequent electron transfer.</text>
</comment>
<comment type="similarity">
    <text evidence="2">Belongs to the reaction center PufL/M/PsbA/D family.</text>
</comment>
<proteinExistence type="inferred from homology"/>
<reference key="1">
    <citation type="submission" date="2007-03" db="EMBL/GenBank/DDBJ databases">
        <title>Sequence analysis of Arabidopsis pumila JS2 chloroplast DNA.</title>
        <authorList>
            <person name="Hosouchi T."/>
            <person name="Tsuruoka H."/>
            <person name="Kotani H."/>
        </authorList>
    </citation>
    <scope>NUCLEOTIDE SEQUENCE [LARGE SCALE GENOMIC DNA]</scope>
</reference>
<sequence>MTAILERRESESLWGRFCNWITSTENRLYIGWFGVLMIPTLLTATSVFIIAFIAAPPVDIDGIREPVSGSLLYGNNIISGAIIPTSAAIGLHFYPIWEAASVDEWLYNGGPYELIVLHFLLGVACYMGREWELSFRLGMRPWIAVAYSAPVAAATAVFLIYPIGQGSFSDGMPLGISGTFNFMIVFQAEHNILMHPFHMLGVAGVFGGSLFSAMHGSLVTSSLIRETTENESANEGYRFGQEEETYNIVAAHGYFGRLIFQYASFNNSRSLHFFLAAWPVVGIWFTALGISTMAFNLNGFNFNQSVVDSQGRVINTWADIINRANLGMEVMHERNAHNFPLDLAAVEAPSTNG</sequence>
<dbReference type="EC" id="1.10.3.9" evidence="2"/>
<dbReference type="EMBL" id="AP009368">
    <property type="protein sequence ID" value="BAF49919.1"/>
    <property type="molecule type" value="Genomic_DNA"/>
</dbReference>
<dbReference type="RefSeq" id="YP_001123095.1">
    <property type="nucleotide sequence ID" value="NC_009267.1"/>
</dbReference>
<dbReference type="SMR" id="A4QJR4"/>
<dbReference type="GeneID" id="4962477"/>
<dbReference type="GO" id="GO:0009535">
    <property type="term" value="C:chloroplast thylakoid membrane"/>
    <property type="evidence" value="ECO:0007669"/>
    <property type="project" value="UniProtKB-SubCell"/>
</dbReference>
<dbReference type="GO" id="GO:0009523">
    <property type="term" value="C:photosystem II"/>
    <property type="evidence" value="ECO:0007669"/>
    <property type="project" value="UniProtKB-KW"/>
</dbReference>
<dbReference type="GO" id="GO:0016168">
    <property type="term" value="F:chlorophyll binding"/>
    <property type="evidence" value="ECO:0007669"/>
    <property type="project" value="UniProtKB-UniRule"/>
</dbReference>
<dbReference type="GO" id="GO:0045156">
    <property type="term" value="F:electron transporter, transferring electrons within the cyclic electron transport pathway of photosynthesis activity"/>
    <property type="evidence" value="ECO:0007669"/>
    <property type="project" value="InterPro"/>
</dbReference>
<dbReference type="GO" id="GO:0005506">
    <property type="term" value="F:iron ion binding"/>
    <property type="evidence" value="ECO:0007669"/>
    <property type="project" value="UniProtKB-UniRule"/>
</dbReference>
<dbReference type="GO" id="GO:0016682">
    <property type="term" value="F:oxidoreductase activity, acting on diphenols and related substances as donors, oxygen as acceptor"/>
    <property type="evidence" value="ECO:0007669"/>
    <property type="project" value="UniProtKB-UniRule"/>
</dbReference>
<dbReference type="GO" id="GO:0010242">
    <property type="term" value="F:oxygen evolving activity"/>
    <property type="evidence" value="ECO:0007669"/>
    <property type="project" value="UniProtKB-EC"/>
</dbReference>
<dbReference type="GO" id="GO:0009772">
    <property type="term" value="P:photosynthetic electron transport in photosystem II"/>
    <property type="evidence" value="ECO:0007669"/>
    <property type="project" value="InterPro"/>
</dbReference>
<dbReference type="GO" id="GO:0009635">
    <property type="term" value="P:response to herbicide"/>
    <property type="evidence" value="ECO:0007669"/>
    <property type="project" value="UniProtKB-KW"/>
</dbReference>
<dbReference type="CDD" id="cd09289">
    <property type="entry name" value="Photosystem-II_D1"/>
    <property type="match status" value="1"/>
</dbReference>
<dbReference type="FunFam" id="1.20.85.10:FF:000002">
    <property type="entry name" value="Photosystem II protein D1"/>
    <property type="match status" value="1"/>
</dbReference>
<dbReference type="Gene3D" id="1.20.85.10">
    <property type="entry name" value="Photosystem II protein D1-like"/>
    <property type="match status" value="1"/>
</dbReference>
<dbReference type="HAMAP" id="MF_01379">
    <property type="entry name" value="PSII_PsbA_D1"/>
    <property type="match status" value="1"/>
</dbReference>
<dbReference type="InterPro" id="IPR055266">
    <property type="entry name" value="D1/D2"/>
</dbReference>
<dbReference type="InterPro" id="IPR036854">
    <property type="entry name" value="Photo_II_D1/D2_sf"/>
</dbReference>
<dbReference type="InterPro" id="IPR000484">
    <property type="entry name" value="Photo_RC_L/M"/>
</dbReference>
<dbReference type="InterPro" id="IPR055265">
    <property type="entry name" value="Photo_RC_L/M_CS"/>
</dbReference>
<dbReference type="InterPro" id="IPR005867">
    <property type="entry name" value="PSII_D1"/>
</dbReference>
<dbReference type="NCBIfam" id="TIGR01151">
    <property type="entry name" value="psbA"/>
    <property type="match status" value="1"/>
</dbReference>
<dbReference type="PANTHER" id="PTHR33149:SF12">
    <property type="entry name" value="PHOTOSYSTEM II D2 PROTEIN"/>
    <property type="match status" value="1"/>
</dbReference>
<dbReference type="PANTHER" id="PTHR33149">
    <property type="entry name" value="PHOTOSYSTEM II PROTEIN D1"/>
    <property type="match status" value="1"/>
</dbReference>
<dbReference type="Pfam" id="PF00124">
    <property type="entry name" value="Photo_RC"/>
    <property type="match status" value="1"/>
</dbReference>
<dbReference type="PRINTS" id="PR00256">
    <property type="entry name" value="REACTNCENTRE"/>
</dbReference>
<dbReference type="SUPFAM" id="SSF81483">
    <property type="entry name" value="Bacterial photosystem II reaction centre, L and M subunits"/>
    <property type="match status" value="1"/>
</dbReference>
<dbReference type="PROSITE" id="PS00244">
    <property type="entry name" value="REACTION_CENTER"/>
    <property type="match status" value="1"/>
</dbReference>
<keyword id="KW-0007">Acetylation</keyword>
<keyword id="KW-0106">Calcium</keyword>
<keyword id="KW-0148">Chlorophyll</keyword>
<keyword id="KW-0150">Chloroplast</keyword>
<keyword id="KW-0157">Chromophore</keyword>
<keyword id="KW-0249">Electron transport</keyword>
<keyword id="KW-0359">Herbicide resistance</keyword>
<keyword id="KW-0408">Iron</keyword>
<keyword id="KW-0460">Magnesium</keyword>
<keyword id="KW-0464">Manganese</keyword>
<keyword id="KW-0472">Membrane</keyword>
<keyword id="KW-0479">Metal-binding</keyword>
<keyword id="KW-0560">Oxidoreductase</keyword>
<keyword id="KW-0597">Phosphoprotein</keyword>
<keyword id="KW-0602">Photosynthesis</keyword>
<keyword id="KW-0604">Photosystem II</keyword>
<keyword id="KW-0934">Plastid</keyword>
<keyword id="KW-0793">Thylakoid</keyword>
<keyword id="KW-0812">Transmembrane</keyword>
<keyword id="KW-1133">Transmembrane helix</keyword>
<keyword id="KW-0813">Transport</keyword>
<name>PSBA_OLIPU</name>
<protein>
    <recommendedName>
        <fullName evidence="2">Photosystem II protein D1</fullName>
        <shortName evidence="2">PSII D1 protein</shortName>
        <ecNumber evidence="2">1.10.3.9</ecNumber>
    </recommendedName>
    <alternativeName>
        <fullName evidence="2">Photosystem II Q(B) protein</fullName>
    </alternativeName>
</protein>
<organism>
    <name type="scientific">Olimarabidopsis pumila</name>
    <name type="common">Dwarf rocket</name>
    <name type="synonym">Arabidopsis griffithiana</name>
    <dbReference type="NCBI Taxonomy" id="74718"/>
    <lineage>
        <taxon>Eukaryota</taxon>
        <taxon>Viridiplantae</taxon>
        <taxon>Streptophyta</taxon>
        <taxon>Embryophyta</taxon>
        <taxon>Tracheophyta</taxon>
        <taxon>Spermatophyta</taxon>
        <taxon>Magnoliopsida</taxon>
        <taxon>eudicotyledons</taxon>
        <taxon>Gunneridae</taxon>
        <taxon>Pentapetalae</taxon>
        <taxon>rosids</taxon>
        <taxon>malvids</taxon>
        <taxon>Brassicales</taxon>
        <taxon>Brassicaceae</taxon>
        <taxon>Alyssopsideae</taxon>
        <taxon>Olimarabidopsis</taxon>
    </lineage>
</organism>
<gene>
    <name evidence="2" type="primary">psbA</name>
</gene>
<geneLocation type="chloroplast"/>